<proteinExistence type="inferred from homology"/>
<comment type="function">
    <text evidence="1">F(1)F(0) ATP synthase produces ATP from ADP in the presence of a proton or sodium gradient. F-type ATPases consist of two structural domains, F(1) containing the extramembraneous catalytic core and F(0) containing the membrane proton channel, linked together by a central stalk and a peripheral stalk. During catalysis, ATP synthesis in the catalytic domain of F(1) is coupled via a rotary mechanism of the central stalk subunits to proton translocation.</text>
</comment>
<comment type="function">
    <text evidence="1">Component of the F(0) channel, it forms part of the peripheral stalk, linking F(1) to F(0).</text>
</comment>
<comment type="subunit">
    <text evidence="1">F-type ATPases have 2 components, F(1) - the catalytic core - and F(0) - the membrane proton channel. F(1) has five subunits: alpha(3), beta(3), gamma(1), delta(1), epsilon(1). F(0) has three main subunits: a(1), b(2) and c(10-14). The alpha and beta chains form an alternating ring which encloses part of the gamma chain. F(1) is attached to F(0) by a central stalk formed by the gamma and epsilon chains, while a peripheral stalk is formed by the delta and b chains.</text>
</comment>
<comment type="subcellular location">
    <subcellularLocation>
        <location evidence="1">Cell inner membrane</location>
        <topology evidence="1">Single-pass membrane protein</topology>
    </subcellularLocation>
</comment>
<comment type="similarity">
    <text evidence="1">Belongs to the ATPase B chain family.</text>
</comment>
<dbReference type="EMBL" id="CP000390">
    <property type="protein sequence ID" value="ABG62098.1"/>
    <property type="molecule type" value="Genomic_DNA"/>
</dbReference>
<dbReference type="SMR" id="Q11KH7"/>
<dbReference type="STRING" id="266779.Meso_0698"/>
<dbReference type="KEGG" id="mes:Meso_0698"/>
<dbReference type="eggNOG" id="COG0711">
    <property type="taxonomic scope" value="Bacteria"/>
</dbReference>
<dbReference type="HOGENOM" id="CLU_079215_1_2_5"/>
<dbReference type="OrthoDB" id="9805716at2"/>
<dbReference type="GO" id="GO:0005886">
    <property type="term" value="C:plasma membrane"/>
    <property type="evidence" value="ECO:0007669"/>
    <property type="project" value="UniProtKB-SubCell"/>
</dbReference>
<dbReference type="GO" id="GO:0045259">
    <property type="term" value="C:proton-transporting ATP synthase complex"/>
    <property type="evidence" value="ECO:0007669"/>
    <property type="project" value="UniProtKB-KW"/>
</dbReference>
<dbReference type="GO" id="GO:0046933">
    <property type="term" value="F:proton-transporting ATP synthase activity, rotational mechanism"/>
    <property type="evidence" value="ECO:0007669"/>
    <property type="project" value="UniProtKB-UniRule"/>
</dbReference>
<dbReference type="GO" id="GO:0046961">
    <property type="term" value="F:proton-transporting ATPase activity, rotational mechanism"/>
    <property type="evidence" value="ECO:0007669"/>
    <property type="project" value="TreeGrafter"/>
</dbReference>
<dbReference type="CDD" id="cd06503">
    <property type="entry name" value="ATP-synt_Fo_b"/>
    <property type="match status" value="1"/>
</dbReference>
<dbReference type="Gene3D" id="6.10.250.1580">
    <property type="match status" value="1"/>
</dbReference>
<dbReference type="HAMAP" id="MF_01398">
    <property type="entry name" value="ATP_synth_b_bprime"/>
    <property type="match status" value="1"/>
</dbReference>
<dbReference type="InterPro" id="IPR002146">
    <property type="entry name" value="ATP_synth_b/b'su_bac/chlpt"/>
</dbReference>
<dbReference type="InterPro" id="IPR050059">
    <property type="entry name" value="ATP_synthase_B_chain"/>
</dbReference>
<dbReference type="NCBIfam" id="NF006612">
    <property type="entry name" value="PRK09174.1"/>
    <property type="match status" value="1"/>
</dbReference>
<dbReference type="PANTHER" id="PTHR33445:SF1">
    <property type="entry name" value="ATP SYNTHASE SUBUNIT B"/>
    <property type="match status" value="1"/>
</dbReference>
<dbReference type="PANTHER" id="PTHR33445">
    <property type="entry name" value="ATP SYNTHASE SUBUNIT B', CHLOROPLASTIC"/>
    <property type="match status" value="1"/>
</dbReference>
<dbReference type="Pfam" id="PF00430">
    <property type="entry name" value="ATP-synt_B"/>
    <property type="match status" value="1"/>
</dbReference>
<keyword id="KW-0066">ATP synthesis</keyword>
<keyword id="KW-0997">Cell inner membrane</keyword>
<keyword id="KW-1003">Cell membrane</keyword>
<keyword id="KW-0138">CF(0)</keyword>
<keyword id="KW-0375">Hydrogen ion transport</keyword>
<keyword id="KW-0406">Ion transport</keyword>
<keyword id="KW-0472">Membrane</keyword>
<keyword id="KW-0812">Transmembrane</keyword>
<keyword id="KW-1133">Transmembrane helix</keyword>
<keyword id="KW-0813">Transport</keyword>
<gene>
    <name evidence="1" type="primary">atpF1</name>
    <name type="ordered locus">Meso_0698</name>
</gene>
<sequence length="193" mass="20591">MFVAPAFAQEADHTAGETHTETGVAEGGHEGGFPPFLVETYPSQLLWLAITFGLFYLFLKRVVLPRIAGILEVRSDRIAQDLDQAARMKEDADAAVAAYEQELAEARKKAAAIAQEARDTAKAEAAAERRKVESGLDSKLKEAEARIALIKDTALSDVGTIAEETAAAIVQELVGGKVDKASLSAAVKAVQQQ</sequence>
<feature type="chain" id="PRO_0000368580" description="ATP synthase subunit b 1">
    <location>
        <begin position="1"/>
        <end position="193"/>
    </location>
</feature>
<feature type="transmembrane region" description="Helical" evidence="1">
    <location>
        <begin position="40"/>
        <end position="59"/>
    </location>
</feature>
<feature type="region of interest" description="Disordered" evidence="2">
    <location>
        <begin position="9"/>
        <end position="28"/>
    </location>
</feature>
<feature type="compositionally biased region" description="Basic and acidic residues" evidence="2">
    <location>
        <begin position="10"/>
        <end position="20"/>
    </location>
</feature>
<protein>
    <recommendedName>
        <fullName evidence="1">ATP synthase subunit b 1</fullName>
    </recommendedName>
    <alternativeName>
        <fullName evidence="1">ATP synthase F(0) sector subunit b 1</fullName>
    </alternativeName>
    <alternativeName>
        <fullName evidence="1">ATPase subunit I 1</fullName>
    </alternativeName>
    <alternativeName>
        <fullName evidence="1">F-type ATPase subunit b 1</fullName>
        <shortName evidence="1">F-ATPase subunit b 1</shortName>
    </alternativeName>
</protein>
<accession>Q11KH7</accession>
<reference key="1">
    <citation type="submission" date="2006-06" db="EMBL/GenBank/DDBJ databases">
        <title>Complete sequence of chromosome of Mesorhizobium sp. BNC1.</title>
        <authorList>
            <consortium name="US DOE Joint Genome Institute"/>
            <person name="Copeland A."/>
            <person name="Lucas S."/>
            <person name="Lapidus A."/>
            <person name="Barry K."/>
            <person name="Detter J.C."/>
            <person name="Glavina del Rio T."/>
            <person name="Hammon N."/>
            <person name="Israni S."/>
            <person name="Dalin E."/>
            <person name="Tice H."/>
            <person name="Pitluck S."/>
            <person name="Chertkov O."/>
            <person name="Brettin T."/>
            <person name="Bruce D."/>
            <person name="Han C."/>
            <person name="Tapia R."/>
            <person name="Gilna P."/>
            <person name="Schmutz J."/>
            <person name="Larimer F."/>
            <person name="Land M."/>
            <person name="Hauser L."/>
            <person name="Kyrpides N."/>
            <person name="Mikhailova N."/>
            <person name="Richardson P."/>
        </authorList>
    </citation>
    <scope>NUCLEOTIDE SEQUENCE [LARGE SCALE GENOMIC DNA]</scope>
    <source>
        <strain>BNC1</strain>
    </source>
</reference>
<name>ATPF1_CHESB</name>
<organism>
    <name type="scientific">Chelativorans sp. (strain BNC1)</name>
    <dbReference type="NCBI Taxonomy" id="266779"/>
    <lineage>
        <taxon>Bacteria</taxon>
        <taxon>Pseudomonadati</taxon>
        <taxon>Pseudomonadota</taxon>
        <taxon>Alphaproteobacteria</taxon>
        <taxon>Hyphomicrobiales</taxon>
        <taxon>Phyllobacteriaceae</taxon>
        <taxon>Chelativorans</taxon>
    </lineage>
</organism>
<evidence type="ECO:0000255" key="1">
    <source>
        <dbReference type="HAMAP-Rule" id="MF_01398"/>
    </source>
</evidence>
<evidence type="ECO:0000256" key="2">
    <source>
        <dbReference type="SAM" id="MobiDB-lite"/>
    </source>
</evidence>